<keyword id="KW-0068">Autocatalytic cleavage</keyword>
<keyword id="KW-0963">Cytoplasm</keyword>
<keyword id="KW-0210">Decarboxylase</keyword>
<keyword id="KW-0456">Lyase</keyword>
<keyword id="KW-0566">Pantothenate biosynthesis</keyword>
<keyword id="KW-0670">Pyruvate</keyword>
<keyword id="KW-0704">Schiff base</keyword>
<keyword id="KW-0865">Zymogen</keyword>
<dbReference type="EC" id="4.1.1.11" evidence="1"/>
<dbReference type="EMBL" id="CP001186">
    <property type="protein sequence ID" value="ACK93795.1"/>
    <property type="molecule type" value="Genomic_DNA"/>
</dbReference>
<dbReference type="RefSeq" id="WP_000490186.1">
    <property type="nucleotide sequence ID" value="NC_011772.1"/>
</dbReference>
<dbReference type="SMR" id="B7IPB9"/>
<dbReference type="GeneID" id="72448303"/>
<dbReference type="KEGG" id="bcg:BCG9842_B3748"/>
<dbReference type="HOGENOM" id="CLU_115305_2_0_9"/>
<dbReference type="UniPathway" id="UPA00028">
    <property type="reaction ID" value="UER00002"/>
</dbReference>
<dbReference type="Proteomes" id="UP000006744">
    <property type="component" value="Chromosome"/>
</dbReference>
<dbReference type="GO" id="GO:0005829">
    <property type="term" value="C:cytosol"/>
    <property type="evidence" value="ECO:0007669"/>
    <property type="project" value="TreeGrafter"/>
</dbReference>
<dbReference type="GO" id="GO:0004068">
    <property type="term" value="F:aspartate 1-decarboxylase activity"/>
    <property type="evidence" value="ECO:0007669"/>
    <property type="project" value="UniProtKB-UniRule"/>
</dbReference>
<dbReference type="GO" id="GO:0006523">
    <property type="term" value="P:alanine biosynthetic process"/>
    <property type="evidence" value="ECO:0007669"/>
    <property type="project" value="InterPro"/>
</dbReference>
<dbReference type="GO" id="GO:0015940">
    <property type="term" value="P:pantothenate biosynthetic process"/>
    <property type="evidence" value="ECO:0007669"/>
    <property type="project" value="UniProtKB-UniRule"/>
</dbReference>
<dbReference type="CDD" id="cd06919">
    <property type="entry name" value="Asp_decarbox"/>
    <property type="match status" value="1"/>
</dbReference>
<dbReference type="Gene3D" id="2.40.40.20">
    <property type="match status" value="1"/>
</dbReference>
<dbReference type="HAMAP" id="MF_00446">
    <property type="entry name" value="PanD"/>
    <property type="match status" value="1"/>
</dbReference>
<dbReference type="InterPro" id="IPR009010">
    <property type="entry name" value="Asp_de-COase-like_dom_sf"/>
</dbReference>
<dbReference type="InterPro" id="IPR003190">
    <property type="entry name" value="Asp_decarbox"/>
</dbReference>
<dbReference type="NCBIfam" id="TIGR00223">
    <property type="entry name" value="panD"/>
    <property type="match status" value="1"/>
</dbReference>
<dbReference type="PANTHER" id="PTHR21012">
    <property type="entry name" value="ASPARTATE 1-DECARBOXYLASE"/>
    <property type="match status" value="1"/>
</dbReference>
<dbReference type="PANTHER" id="PTHR21012:SF0">
    <property type="entry name" value="ASPARTATE 1-DECARBOXYLASE"/>
    <property type="match status" value="1"/>
</dbReference>
<dbReference type="Pfam" id="PF02261">
    <property type="entry name" value="Asp_decarbox"/>
    <property type="match status" value="1"/>
</dbReference>
<dbReference type="PIRSF" id="PIRSF006246">
    <property type="entry name" value="Asp_decarbox"/>
    <property type="match status" value="1"/>
</dbReference>
<dbReference type="SUPFAM" id="SSF50692">
    <property type="entry name" value="ADC-like"/>
    <property type="match status" value="1"/>
</dbReference>
<protein>
    <recommendedName>
        <fullName evidence="1">Aspartate 1-decarboxylase</fullName>
        <ecNumber evidence="1">4.1.1.11</ecNumber>
    </recommendedName>
    <alternativeName>
        <fullName evidence="1">Aspartate alpha-decarboxylase</fullName>
    </alternativeName>
    <component>
        <recommendedName>
            <fullName evidence="1">Aspartate 1-decarboxylase beta chain</fullName>
        </recommendedName>
    </component>
    <component>
        <recommendedName>
            <fullName evidence="1">Aspartate 1-decarboxylase alpha chain</fullName>
        </recommendedName>
    </component>
</protein>
<feature type="chain" id="PRO_1000124749" description="Aspartate 1-decarboxylase beta chain" evidence="1">
    <location>
        <begin position="1"/>
        <end position="24"/>
    </location>
</feature>
<feature type="chain" id="PRO_1000124750" description="Aspartate 1-decarboxylase alpha chain" evidence="1">
    <location>
        <begin position="25"/>
        <end position="127"/>
    </location>
</feature>
<feature type="active site" description="Schiff-base intermediate with substrate; via pyruvic acid" evidence="1">
    <location>
        <position position="25"/>
    </location>
</feature>
<feature type="active site" description="Proton donor" evidence="1">
    <location>
        <position position="58"/>
    </location>
</feature>
<feature type="binding site" evidence="1">
    <location>
        <position position="57"/>
    </location>
    <ligand>
        <name>substrate</name>
    </ligand>
</feature>
<feature type="binding site" evidence="1">
    <location>
        <begin position="73"/>
        <end position="75"/>
    </location>
    <ligand>
        <name>substrate</name>
    </ligand>
</feature>
<feature type="modified residue" description="Pyruvic acid (Ser)" evidence="1">
    <location>
        <position position="25"/>
    </location>
</feature>
<accession>B7IPB9</accession>
<sequence>MFRTMMRAKLHRATVTEANLNYVGSITIDEDLMDAVNIVENEKVQIVNNNNGARLETYVIKGERGSGVVCLNGAAARLVQPGDKVIIICYGLVTEEEVHKQEPKIAVLDDNNQIIEMLGAEKAGTIL</sequence>
<proteinExistence type="inferred from homology"/>
<comment type="function">
    <text evidence="1">Catalyzes the pyruvoyl-dependent decarboxylation of aspartate to produce beta-alanine.</text>
</comment>
<comment type="catalytic activity">
    <reaction evidence="1">
        <text>L-aspartate + H(+) = beta-alanine + CO2</text>
        <dbReference type="Rhea" id="RHEA:19497"/>
        <dbReference type="ChEBI" id="CHEBI:15378"/>
        <dbReference type="ChEBI" id="CHEBI:16526"/>
        <dbReference type="ChEBI" id="CHEBI:29991"/>
        <dbReference type="ChEBI" id="CHEBI:57966"/>
        <dbReference type="EC" id="4.1.1.11"/>
    </reaction>
</comment>
<comment type="cofactor">
    <cofactor evidence="1">
        <name>pyruvate</name>
        <dbReference type="ChEBI" id="CHEBI:15361"/>
    </cofactor>
    <text evidence="1">Binds 1 pyruvoyl group covalently per subunit.</text>
</comment>
<comment type="pathway">
    <text evidence="1">Cofactor biosynthesis; (R)-pantothenate biosynthesis; beta-alanine from L-aspartate: step 1/1.</text>
</comment>
<comment type="subunit">
    <text evidence="1">Heterooctamer of four alpha and four beta subunits.</text>
</comment>
<comment type="subcellular location">
    <subcellularLocation>
        <location evidence="1">Cytoplasm</location>
    </subcellularLocation>
</comment>
<comment type="PTM">
    <text evidence="1">Is synthesized initially as an inactive proenzyme, which is activated by self-cleavage at a specific serine bond to produce a beta-subunit with a hydroxyl group at its C-terminus and an alpha-subunit with a pyruvoyl group at its N-terminus.</text>
</comment>
<comment type="similarity">
    <text evidence="1">Belongs to the PanD family.</text>
</comment>
<name>PAND_BACC2</name>
<organism>
    <name type="scientific">Bacillus cereus (strain G9842)</name>
    <dbReference type="NCBI Taxonomy" id="405531"/>
    <lineage>
        <taxon>Bacteria</taxon>
        <taxon>Bacillati</taxon>
        <taxon>Bacillota</taxon>
        <taxon>Bacilli</taxon>
        <taxon>Bacillales</taxon>
        <taxon>Bacillaceae</taxon>
        <taxon>Bacillus</taxon>
        <taxon>Bacillus cereus group</taxon>
    </lineage>
</organism>
<evidence type="ECO:0000255" key="1">
    <source>
        <dbReference type="HAMAP-Rule" id="MF_00446"/>
    </source>
</evidence>
<gene>
    <name evidence="1" type="primary">panD</name>
    <name type="ordered locus">BCG9842_B3748</name>
</gene>
<reference key="1">
    <citation type="submission" date="2008-10" db="EMBL/GenBank/DDBJ databases">
        <title>Genome sequence of Bacillus cereus G9842.</title>
        <authorList>
            <person name="Dodson R.J."/>
            <person name="Durkin A.S."/>
            <person name="Rosovitz M.J."/>
            <person name="Rasko D.A."/>
            <person name="Hoffmaster A."/>
            <person name="Ravel J."/>
            <person name="Sutton G."/>
        </authorList>
    </citation>
    <scope>NUCLEOTIDE SEQUENCE [LARGE SCALE GENOMIC DNA]</scope>
    <source>
        <strain>G9842</strain>
    </source>
</reference>